<protein>
    <recommendedName>
        <fullName>Uncharacterized protein ycf68</fullName>
    </recommendedName>
    <alternativeName>
        <fullName>ORF133</fullName>
    </alternativeName>
</protein>
<accession>P12173</accession>
<evidence type="ECO:0000305" key="1"/>
<organism>
    <name type="scientific">Oryza sativa subsp. japonica</name>
    <name type="common">Rice</name>
    <dbReference type="NCBI Taxonomy" id="39947"/>
    <lineage>
        <taxon>Eukaryota</taxon>
        <taxon>Viridiplantae</taxon>
        <taxon>Streptophyta</taxon>
        <taxon>Embryophyta</taxon>
        <taxon>Tracheophyta</taxon>
        <taxon>Spermatophyta</taxon>
        <taxon>Magnoliopsida</taxon>
        <taxon>Liliopsida</taxon>
        <taxon>Poales</taxon>
        <taxon>Poaceae</taxon>
        <taxon>BOP clade</taxon>
        <taxon>Oryzoideae</taxon>
        <taxon>Oryzeae</taxon>
        <taxon>Oryzinae</taxon>
        <taxon>Oryza</taxon>
        <taxon>Oryza sativa</taxon>
    </lineage>
</organism>
<proteinExistence type="inferred from homology"/>
<feature type="chain" id="PRO_0000217397" description="Uncharacterized protein ycf68">
    <location>
        <begin position="1"/>
        <end position="133"/>
    </location>
</feature>
<gene>
    <name type="primary">ycf68-1</name>
    <name type="ordered locus">LOC_Osp1g01010</name>
</gene>
<gene>
    <name type="primary">ycf68-2</name>
</gene>
<comment type="subcellular location">
    <subcellularLocation>
        <location>Plastid</location>
        <location>Chloroplast</location>
    </subcellularLocation>
</comment>
<comment type="similarity">
    <text evidence="1">Belongs to the ycf68 family.</text>
</comment>
<reference key="1">
    <citation type="journal article" date="1989" name="Mol. Gen. Genet.">
        <title>The complete sequence of the rice (Oryza sativa) chloroplast genome: intermolecular recombination between distinct tRNA genes accounts for a major plastid DNA inversion during the evolution of the cereals.</title>
        <authorList>
            <person name="Hiratsuka J."/>
            <person name="Shimada H."/>
            <person name="Whittier R."/>
            <person name="Ishibashi T."/>
            <person name="Sakamoto M."/>
            <person name="Mori M."/>
            <person name="Kondo C."/>
            <person name="Honji Y."/>
            <person name="Sun C.-R."/>
            <person name="Meng B.-Y."/>
            <person name="Li Y.-Q."/>
            <person name="Kanno A."/>
            <person name="Nishizawa Y."/>
            <person name="Hirai A."/>
            <person name="Shinozaki K."/>
            <person name="Sugiura M."/>
        </authorList>
    </citation>
    <scope>NUCLEOTIDE SEQUENCE [LARGE SCALE GENOMIC DNA]</scope>
    <source>
        <strain>cv. Nipponbare</strain>
    </source>
</reference>
<reference key="2">
    <citation type="journal article" date="2004" name="Plant Physiol.">
        <title>A comparison of rice chloroplast genomes.</title>
        <authorList>
            <person name="Tang J."/>
            <person name="Xia H."/>
            <person name="Cao M."/>
            <person name="Zhang X."/>
            <person name="Zeng W."/>
            <person name="Hu S."/>
            <person name="Tong W."/>
            <person name="Wang J."/>
            <person name="Wang J."/>
            <person name="Yu J."/>
            <person name="Yang H."/>
            <person name="Zhu L."/>
        </authorList>
    </citation>
    <scope>NUCLEOTIDE SEQUENCE [LARGE SCALE GENOMIC DNA]</scope>
    <source>
        <strain>cv. Nipponbare</strain>
    </source>
</reference>
<sequence>MAYSSCLNRSLKPNKLLLRRIDGAIQVRSHVDLTFYSLVGSGRSGGGTTAPLFSRIHTSLISVWRAISRAQVEVRPQWENGAPNNASSQTKNYEITLSFWGDGGIVPFEPFFHAFPGGLEKAAINRTSLILPS</sequence>
<keyword id="KW-0150">Chloroplast</keyword>
<keyword id="KW-0934">Plastid</keyword>
<keyword id="KW-1185">Reference proteome</keyword>
<name>YCF68_ORYSJ</name>
<dbReference type="EMBL" id="X15901">
    <property type="protein sequence ID" value="CAA33945.1"/>
    <property type="molecule type" value="Genomic_DNA"/>
</dbReference>
<dbReference type="EMBL" id="X15901">
    <property type="protein sequence ID" value="CAA33915.1"/>
    <property type="molecule type" value="Genomic_DNA"/>
</dbReference>
<dbReference type="EMBL" id="AY522330">
    <property type="status" value="NOT_ANNOTATED_CDS"/>
    <property type="molecule type" value="Genomic_DNA"/>
</dbReference>
<dbReference type="PIR" id="JQ0279">
    <property type="entry name" value="JQ0279"/>
</dbReference>
<dbReference type="RefSeq" id="NP_039436.1">
    <property type="nucleotide sequence ID" value="NC_001320.1"/>
</dbReference>
<dbReference type="RefSeq" id="NP_039454.1">
    <property type="nucleotide sequence ID" value="NC_001320.1"/>
</dbReference>
<dbReference type="FunCoup" id="P12173">
    <property type="interactions" value="2"/>
</dbReference>
<dbReference type="STRING" id="39947.P12173"/>
<dbReference type="PaxDb" id="39947-P12173"/>
<dbReference type="KEGG" id="dosa:tRNA-Ile__GAU"/>
<dbReference type="KEGG" id="dosa:tRNA-Ile__GAU.1"/>
<dbReference type="KEGG" id="osa:3131482"/>
<dbReference type="KEGG" id="osa:3131492"/>
<dbReference type="InParanoid" id="P12173"/>
<dbReference type="OrthoDB" id="1737456at2759"/>
<dbReference type="Proteomes" id="UP000059680">
    <property type="component" value="Chloroplast"/>
</dbReference>
<dbReference type="GO" id="GO:0009507">
    <property type="term" value="C:chloroplast"/>
    <property type="evidence" value="ECO:0007669"/>
    <property type="project" value="UniProtKB-SubCell"/>
</dbReference>
<dbReference type="GO" id="GO:0009536">
    <property type="term" value="C:plastid"/>
    <property type="evidence" value="ECO:0000250"/>
    <property type="project" value="Gramene"/>
</dbReference>
<dbReference type="InterPro" id="IPR022546">
    <property type="entry name" value="Uncharacterised_Ycf68"/>
</dbReference>
<dbReference type="PANTHER" id="PTHR34890">
    <property type="entry name" value="ORF16-LACZ FUSION PROTEIN-RELATED"/>
    <property type="match status" value="1"/>
</dbReference>
<dbReference type="Pfam" id="PF10839">
    <property type="entry name" value="DUF2647"/>
    <property type="match status" value="1"/>
</dbReference>
<geneLocation type="chloroplast"/>